<evidence type="ECO:0000255" key="1">
    <source>
        <dbReference type="HAMAP-Rule" id="MF_01214"/>
    </source>
</evidence>
<sequence length="195" mass="21535">MTKIETLVERARRLKEKGLTTEEIADELNVSRETALWLITRVGETPPSDIYVEWRELTKPSRLRLVAMAMADMIVSEVKEDIEVVVGIATSGIPLAAMVAEELGCEFTIYYPRKFKTDEEKPKGGILSENFARVSGKKCAIVDDITSTGRSIKEAIEVIEANDGKAVCAAVIVNKRGGNEIEGIPLLSMLKILRI</sequence>
<gene>
    <name evidence="1" type="primary">gfcR</name>
    <name type="ordered locus">AF_0386</name>
</gene>
<proteinExistence type="inferred from homology"/>
<keyword id="KW-0238">DNA-binding</keyword>
<keyword id="KW-1185">Reference proteome</keyword>
<keyword id="KW-0804">Transcription</keyword>
<keyword id="KW-0805">Transcription regulation</keyword>
<reference key="1">
    <citation type="journal article" date="1997" name="Nature">
        <title>The complete genome sequence of the hyperthermophilic, sulphate-reducing archaeon Archaeoglobus fulgidus.</title>
        <authorList>
            <person name="Klenk H.-P."/>
            <person name="Clayton R.A."/>
            <person name="Tomb J.-F."/>
            <person name="White O."/>
            <person name="Nelson K.E."/>
            <person name="Ketchum K.A."/>
            <person name="Dodson R.J."/>
            <person name="Gwinn M.L."/>
            <person name="Hickey E.K."/>
            <person name="Peterson J.D."/>
            <person name="Richardson D.L."/>
            <person name="Kerlavage A.R."/>
            <person name="Graham D.E."/>
            <person name="Kyrpides N.C."/>
            <person name="Fleischmann R.D."/>
            <person name="Quackenbush J."/>
            <person name="Lee N.H."/>
            <person name="Sutton G.G."/>
            <person name="Gill S.R."/>
            <person name="Kirkness E.F."/>
            <person name="Dougherty B.A."/>
            <person name="McKenney K."/>
            <person name="Adams M.D."/>
            <person name="Loftus B.J."/>
            <person name="Peterson S.N."/>
            <person name="Reich C.I."/>
            <person name="McNeil L.K."/>
            <person name="Badger J.H."/>
            <person name="Glodek A."/>
            <person name="Zhou L."/>
            <person name="Overbeek R."/>
            <person name="Gocayne J.D."/>
            <person name="Weidman J.F."/>
            <person name="McDonald L.A."/>
            <person name="Utterback T.R."/>
            <person name="Cotton M.D."/>
            <person name="Spriggs T."/>
            <person name="Artiach P."/>
            <person name="Kaine B.P."/>
            <person name="Sykes S.M."/>
            <person name="Sadow P.W."/>
            <person name="D'Andrea K.P."/>
            <person name="Bowman C."/>
            <person name="Fujii C."/>
            <person name="Garland S.A."/>
            <person name="Mason T.M."/>
            <person name="Olsen G.J."/>
            <person name="Fraser C.M."/>
            <person name="Smith H.O."/>
            <person name="Woese C.R."/>
            <person name="Venter J.C."/>
        </authorList>
    </citation>
    <scope>NUCLEOTIDE SEQUENCE [LARGE SCALE GENOMIC DNA]</scope>
    <source>
        <strain>ATCC 49558 / DSM 4304 / JCM 9628 / NBRC 100126 / VC-16</strain>
    </source>
</reference>
<feature type="chain" id="PRO_0000110806" description="Transcriptional regulator GfcR">
    <location>
        <begin position="1"/>
        <end position="195"/>
    </location>
</feature>
<protein>
    <recommendedName>
        <fullName evidence="1">Transcriptional regulator GfcR</fullName>
    </recommendedName>
</protein>
<comment type="domain">
    <text evidence="1">Contains an N-terminal DNA-binding winged helix-turn-helix domain and a C-terminal regulatory domain (or effector binding domain) resembling phosphoribosyltransferase (PRT) domain.</text>
</comment>
<comment type="similarity">
    <text evidence="1">Belongs to the purine/pyrimidine phosphoribosyltransferase family. GfcR subfamily.</text>
</comment>
<name>GFCR_ARCFU</name>
<dbReference type="EMBL" id="AE000782">
    <property type="protein sequence ID" value="AAB90851.1"/>
    <property type="molecule type" value="Genomic_DNA"/>
</dbReference>
<dbReference type="PIR" id="B69298">
    <property type="entry name" value="B69298"/>
</dbReference>
<dbReference type="RefSeq" id="WP_010877893.1">
    <property type="nucleotide sequence ID" value="NC_000917.1"/>
</dbReference>
<dbReference type="SMR" id="O29861"/>
<dbReference type="STRING" id="224325.AF_0386"/>
<dbReference type="PaxDb" id="224325-AF_0386"/>
<dbReference type="EnsemblBacteria" id="AAB90851">
    <property type="protein sequence ID" value="AAB90851"/>
    <property type="gene ID" value="AF_0386"/>
</dbReference>
<dbReference type="KEGG" id="afu:AF_0386"/>
<dbReference type="eggNOG" id="arCOG00028">
    <property type="taxonomic scope" value="Archaea"/>
</dbReference>
<dbReference type="HOGENOM" id="CLU_111001_0_0_2"/>
<dbReference type="OrthoDB" id="68893at2157"/>
<dbReference type="PhylomeDB" id="O29861"/>
<dbReference type="Proteomes" id="UP000002199">
    <property type="component" value="Chromosome"/>
</dbReference>
<dbReference type="GO" id="GO:0003677">
    <property type="term" value="F:DNA binding"/>
    <property type="evidence" value="ECO:0007669"/>
    <property type="project" value="UniProtKB-UniRule"/>
</dbReference>
<dbReference type="GO" id="GO:0004588">
    <property type="term" value="F:orotate phosphoribosyltransferase activity"/>
    <property type="evidence" value="ECO:0007669"/>
    <property type="project" value="TreeGrafter"/>
</dbReference>
<dbReference type="GO" id="GO:0019856">
    <property type="term" value="P:pyrimidine nucleobase biosynthetic process"/>
    <property type="evidence" value="ECO:0007669"/>
    <property type="project" value="TreeGrafter"/>
</dbReference>
<dbReference type="GO" id="GO:0010468">
    <property type="term" value="P:regulation of gene expression"/>
    <property type="evidence" value="ECO:0007669"/>
    <property type="project" value="UniProtKB-UniRule"/>
</dbReference>
<dbReference type="GO" id="GO:0006222">
    <property type="term" value="P:UMP biosynthetic process"/>
    <property type="evidence" value="ECO:0007669"/>
    <property type="project" value="TreeGrafter"/>
</dbReference>
<dbReference type="CDD" id="cd06223">
    <property type="entry name" value="PRTases_typeI"/>
    <property type="match status" value="1"/>
</dbReference>
<dbReference type="Gene3D" id="3.40.50.2020">
    <property type="match status" value="1"/>
</dbReference>
<dbReference type="HAMAP" id="MF_01214">
    <property type="entry name" value="GfcR"/>
    <property type="match status" value="1"/>
</dbReference>
<dbReference type="InterPro" id="IPR022854">
    <property type="entry name" value="GfcR-like"/>
</dbReference>
<dbReference type="InterPro" id="IPR000836">
    <property type="entry name" value="PRibTrfase_dom"/>
</dbReference>
<dbReference type="InterPro" id="IPR029057">
    <property type="entry name" value="PRTase-like"/>
</dbReference>
<dbReference type="NCBIfam" id="NF002620">
    <property type="entry name" value="PRK02277.1"/>
    <property type="match status" value="1"/>
</dbReference>
<dbReference type="PANTHER" id="PTHR19278">
    <property type="entry name" value="OROTATE PHOSPHORIBOSYLTRANSFERASE"/>
    <property type="match status" value="1"/>
</dbReference>
<dbReference type="PANTHER" id="PTHR19278:SF41">
    <property type="entry name" value="PYRE-LIKE PROTEIN"/>
    <property type="match status" value="1"/>
</dbReference>
<dbReference type="Pfam" id="PF00156">
    <property type="entry name" value="Pribosyltran"/>
    <property type="match status" value="1"/>
</dbReference>
<dbReference type="SUPFAM" id="SSF53271">
    <property type="entry name" value="PRTase-like"/>
    <property type="match status" value="1"/>
</dbReference>
<accession>O29861</accession>
<organism>
    <name type="scientific">Archaeoglobus fulgidus (strain ATCC 49558 / DSM 4304 / JCM 9628 / NBRC 100126 / VC-16)</name>
    <dbReference type="NCBI Taxonomy" id="224325"/>
    <lineage>
        <taxon>Archaea</taxon>
        <taxon>Methanobacteriati</taxon>
        <taxon>Methanobacteriota</taxon>
        <taxon>Archaeoglobi</taxon>
        <taxon>Archaeoglobales</taxon>
        <taxon>Archaeoglobaceae</taxon>
        <taxon>Archaeoglobus</taxon>
    </lineage>
</organism>